<gene>
    <name evidence="1" type="primary">leuC</name>
</gene>
<comment type="function">
    <text evidence="1">Catalyzes the isomerization between 2-isopropylmalate and 3-isopropylmalate, via the formation of 2-isopropylmaleate.</text>
</comment>
<comment type="catalytic activity">
    <reaction evidence="1">
        <text>(2R,3S)-3-isopropylmalate = (2S)-2-isopropylmalate</text>
        <dbReference type="Rhea" id="RHEA:32287"/>
        <dbReference type="ChEBI" id="CHEBI:1178"/>
        <dbReference type="ChEBI" id="CHEBI:35121"/>
        <dbReference type="EC" id="4.2.1.33"/>
    </reaction>
</comment>
<comment type="cofactor">
    <cofactor evidence="1">
        <name>[4Fe-4S] cluster</name>
        <dbReference type="ChEBI" id="CHEBI:49883"/>
    </cofactor>
    <text evidence="1">Binds 1 [4Fe-4S] cluster per subunit.</text>
</comment>
<comment type="pathway">
    <text evidence="1">Amino-acid biosynthesis; L-leucine biosynthesis; L-leucine from 3-methyl-2-oxobutanoate: step 2/4.</text>
</comment>
<comment type="subunit">
    <text evidence="1">Heterodimer of LeuC and LeuD.</text>
</comment>
<comment type="similarity">
    <text evidence="1">Belongs to the aconitase/IPM isomerase family. LeuC type 1 subfamily.</text>
</comment>
<proteinExistence type="inferred from homology"/>
<sequence>MGKTLYHKLYNSHIVYEQNNVTSILYIDLHLIHEVTXPQAFNSLRLKNRKIRQPKKTFATMDHNVPTHNRDIKNSEYMAKIQMEELSKNCKDFNIKLYDINHPHQGIVHVLGPEKGMTLPGMVIVCGDSHTSTHGAFGALAFGIGTSEVEHVLATQTLQQNRLKTMNIEITGNINPMVFAKDIILSIIRKLSTSGGIGYVIEFSGSVISQLSMESRMTICNMSIEMGAKSGLIAPDIITYNYLKNKSYSPKNKYWNNAINYWNTLKSDKNAFFDKKISINISNLAPQITWGTKPDQVISIDEPIPNIDSLKMFLNKNQLKNPLLYMGLKPGEYLNNLVVDKVFIGSCTNSRTEDLRAAANIVQNTHVAKNVHAIVVPGSGMVKLQAEEEGLDKIFINAGFEWRLPGCSMCLGMNLDRLKPKERCASTSNRNFEGRQGRDGRTHLVSPAMAAAAAIFGHFVDIRKI</sequence>
<evidence type="ECO:0000255" key="1">
    <source>
        <dbReference type="HAMAP-Rule" id="MF_01026"/>
    </source>
</evidence>
<keyword id="KW-0004">4Fe-4S</keyword>
<keyword id="KW-0028">Amino-acid biosynthesis</keyword>
<keyword id="KW-0100">Branched-chain amino acid biosynthesis</keyword>
<keyword id="KW-0408">Iron</keyword>
<keyword id="KW-0411">Iron-sulfur</keyword>
<keyword id="KW-0432">Leucine biosynthesis</keyword>
<keyword id="KW-0456">Lyase</keyword>
<keyword id="KW-0479">Metal-binding</keyword>
<dbReference type="EC" id="4.2.1.33" evidence="1"/>
<dbReference type="EMBL" id="AJ426489">
    <property type="protein sequence ID" value="CAD20139.1"/>
    <property type="molecule type" value="Genomic_DNA"/>
</dbReference>
<dbReference type="UniPathway" id="UPA00048">
    <property type="reaction ID" value="UER00071"/>
</dbReference>
<dbReference type="GO" id="GO:0003861">
    <property type="term" value="F:3-isopropylmalate dehydratase activity"/>
    <property type="evidence" value="ECO:0007669"/>
    <property type="project" value="UniProtKB-UniRule"/>
</dbReference>
<dbReference type="GO" id="GO:0051539">
    <property type="term" value="F:4 iron, 4 sulfur cluster binding"/>
    <property type="evidence" value="ECO:0007669"/>
    <property type="project" value="UniProtKB-KW"/>
</dbReference>
<dbReference type="GO" id="GO:0046872">
    <property type="term" value="F:metal ion binding"/>
    <property type="evidence" value="ECO:0007669"/>
    <property type="project" value="UniProtKB-KW"/>
</dbReference>
<dbReference type="GO" id="GO:0009098">
    <property type="term" value="P:L-leucine biosynthetic process"/>
    <property type="evidence" value="ECO:0007669"/>
    <property type="project" value="UniProtKB-UniRule"/>
</dbReference>
<dbReference type="CDD" id="cd01583">
    <property type="entry name" value="IPMI"/>
    <property type="match status" value="1"/>
</dbReference>
<dbReference type="FunFam" id="3.30.499.10:FF:000007">
    <property type="entry name" value="3-isopropylmalate dehydratase large subunit"/>
    <property type="match status" value="1"/>
</dbReference>
<dbReference type="Gene3D" id="3.30.499.10">
    <property type="entry name" value="Aconitase, domain 3"/>
    <property type="match status" value="2"/>
</dbReference>
<dbReference type="HAMAP" id="MF_01026">
    <property type="entry name" value="LeuC_type1"/>
    <property type="match status" value="1"/>
</dbReference>
<dbReference type="InterPro" id="IPR004430">
    <property type="entry name" value="3-IsopropMal_deHydase_lsu"/>
</dbReference>
<dbReference type="InterPro" id="IPR015931">
    <property type="entry name" value="Acnase/IPM_dHydase_lsu_aba_1/3"/>
</dbReference>
<dbReference type="InterPro" id="IPR001030">
    <property type="entry name" value="Acoase/IPM_deHydtase_lsu_aba"/>
</dbReference>
<dbReference type="InterPro" id="IPR018136">
    <property type="entry name" value="Aconitase_4Fe-4S_BS"/>
</dbReference>
<dbReference type="InterPro" id="IPR036008">
    <property type="entry name" value="Aconitase_4Fe-4S_dom"/>
</dbReference>
<dbReference type="InterPro" id="IPR050067">
    <property type="entry name" value="IPM_dehydratase_rel_enz"/>
</dbReference>
<dbReference type="InterPro" id="IPR033941">
    <property type="entry name" value="IPMI_cat"/>
</dbReference>
<dbReference type="NCBIfam" id="TIGR00170">
    <property type="entry name" value="leuC"/>
    <property type="match status" value="1"/>
</dbReference>
<dbReference type="NCBIfam" id="NF004016">
    <property type="entry name" value="PRK05478.1"/>
    <property type="match status" value="1"/>
</dbReference>
<dbReference type="NCBIfam" id="NF009116">
    <property type="entry name" value="PRK12466.1"/>
    <property type="match status" value="1"/>
</dbReference>
<dbReference type="PANTHER" id="PTHR43822:SF9">
    <property type="entry name" value="3-ISOPROPYLMALATE DEHYDRATASE"/>
    <property type="match status" value="1"/>
</dbReference>
<dbReference type="PANTHER" id="PTHR43822">
    <property type="entry name" value="HOMOACONITASE, MITOCHONDRIAL-RELATED"/>
    <property type="match status" value="1"/>
</dbReference>
<dbReference type="Pfam" id="PF00330">
    <property type="entry name" value="Aconitase"/>
    <property type="match status" value="1"/>
</dbReference>
<dbReference type="PRINTS" id="PR00415">
    <property type="entry name" value="ACONITASE"/>
</dbReference>
<dbReference type="SUPFAM" id="SSF53732">
    <property type="entry name" value="Aconitase iron-sulfur domain"/>
    <property type="match status" value="1"/>
</dbReference>
<dbReference type="PROSITE" id="PS00450">
    <property type="entry name" value="ACONITASE_1"/>
    <property type="match status" value="1"/>
</dbReference>
<dbReference type="PROSITE" id="PS01244">
    <property type="entry name" value="ACONITASE_2"/>
    <property type="match status" value="1"/>
</dbReference>
<accession>P58945</accession>
<protein>
    <recommendedName>
        <fullName evidence="1">3-isopropylmalate dehydratase large subunit</fullName>
        <ecNumber evidence="1">4.2.1.33</ecNumber>
    </recommendedName>
    <alternativeName>
        <fullName evidence="1">Alpha-IPM isomerase</fullName>
        <shortName evidence="1">IPMI</shortName>
    </alternativeName>
    <alternativeName>
        <fullName evidence="1">Isopropylmalate isomerase</fullName>
    </alternativeName>
</protein>
<reference key="1">
    <citation type="journal article" date="2002" name="Appl. Environ. Microbiol.">
        <title>Molecular characterization of the leucine cluster in Buchnera sp. strain PSY, a primary endosymbiont of the aphid Pemphigus spyrothecae.</title>
        <authorList>
            <person name="Sabater-Munoz B."/>
            <person name="Gomez-Valero L."/>
            <person name="van Ham R.C.H.J."/>
            <person name="Silva F.J."/>
            <person name="Latorre A."/>
        </authorList>
    </citation>
    <scope>NUCLEOTIDE SEQUENCE [GENOMIC DNA]</scope>
</reference>
<name>LEUC_BUCPS</name>
<organism>
    <name type="scientific">Buchnera aphidicola subsp. Pemphigus spyrothecae</name>
    <dbReference type="NCBI Taxonomy" id="98799"/>
    <lineage>
        <taxon>Bacteria</taxon>
        <taxon>Pseudomonadati</taxon>
        <taxon>Pseudomonadota</taxon>
        <taxon>Gammaproteobacteria</taxon>
        <taxon>Enterobacterales</taxon>
        <taxon>Erwiniaceae</taxon>
        <taxon>Buchnera</taxon>
    </lineage>
</organism>
<feature type="chain" id="PRO_0000076719" description="3-isopropylmalate dehydratase large subunit">
    <location>
        <begin position="1"/>
        <end position="465"/>
    </location>
</feature>
<feature type="binding site" evidence="1">
    <location>
        <position position="347"/>
    </location>
    <ligand>
        <name>[4Fe-4S] cluster</name>
        <dbReference type="ChEBI" id="CHEBI:49883"/>
    </ligand>
</feature>
<feature type="binding site" evidence="1">
    <location>
        <position position="407"/>
    </location>
    <ligand>
        <name>[4Fe-4S] cluster</name>
        <dbReference type="ChEBI" id="CHEBI:49883"/>
    </ligand>
</feature>
<feature type="binding site" evidence="1">
    <location>
        <position position="410"/>
    </location>
    <ligand>
        <name>[4Fe-4S] cluster</name>
        <dbReference type="ChEBI" id="CHEBI:49883"/>
    </ligand>
</feature>